<protein>
    <recommendedName>
        <fullName evidence="1">Replication protein E1</fullName>
        <ecNumber evidence="1">5.6.2.4</ecNumber>
    </recommendedName>
    <alternativeName>
        <fullName evidence="1">ATP-dependent helicase E1</fullName>
    </alternativeName>
    <alternativeName>
        <fullName evidence="1">DNA 3'-5' helicase E1</fullName>
    </alternativeName>
</protein>
<feature type="chain" id="PRO_0000133166" description="Replication protein E1">
    <location>
        <begin position="1"/>
        <end position="602"/>
    </location>
</feature>
<feature type="domain" description="SF3 helicase" evidence="1">
    <location>
        <begin position="405"/>
        <end position="555"/>
    </location>
</feature>
<feature type="region of interest" description="DNA-binding region" evidence="1">
    <location>
        <begin position="138"/>
        <end position="306"/>
    </location>
</feature>
<feature type="region of interest" description="Disordered" evidence="2">
    <location>
        <begin position="577"/>
        <end position="602"/>
    </location>
</feature>
<feature type="short sequence motif" description="Nuclear localization signal" evidence="1">
    <location>
        <begin position="74"/>
        <end position="76"/>
    </location>
</feature>
<feature type="binding site" evidence="1">
    <location>
        <begin position="431"/>
        <end position="438"/>
    </location>
    <ligand>
        <name>ATP</name>
        <dbReference type="ChEBI" id="CHEBI:30616"/>
    </ligand>
</feature>
<feature type="modified residue" description="Phosphoserine; by host" evidence="1">
    <location>
        <position position="80"/>
    </location>
</feature>
<feature type="modified residue" description="Phosphoserine; by host" evidence="1">
    <location>
        <position position="84"/>
    </location>
</feature>
<feature type="modified residue" description="Phosphoserine; by host" evidence="1">
    <location>
        <position position="95"/>
    </location>
</feature>
<feature type="cross-link" description="Glycyl lysine isopeptide (Lys-Gly) (interchain with G-Cter in SUMO)" evidence="1">
    <location>
        <position position="512"/>
    </location>
</feature>
<sequence>MAEGTDPLDDCGGFLDTEADCLDCDNLEEDLTELFDADTVSSLLDDTDQVQGNSLEPFQHHEATETLKSIEHLKRKYVDSPDKSLGIDNSVNALSPRLQAFSLSGQKKAVKKRLFGTDGDEAASGAESLQVESGFGSQQSVSDTPVTDILNANTARVKHLLLFRQAHSVSFSELTRTFQSDKTMSWDWVGGLADIHVSVLESLQTSLRSHCVYVQYDLNFAETNASSLLLLLRFKAQKCRDGVKALLSQLLGVQDLKVLLEPPKTRSVAVALFWYKRAMVSGVFSYGPMPEWITQQTNVNHQMLQEKPFQLSVMVQWAYDNHLQDESSIAYKYAMLAETDENARAFLASNSQAKYVRDCCNMVRLYLRAEMRQMTMSAWINYRLDGMNDDGDWKVVVHFLRHQRVEFIPFMVKLKAFLRGTPKKNCMVFYGPPNSGKSYFCMSLIRLLAGRVLSFANSRSHFWLQPLADAKLALVDDATSACWDFIDTYLRNALDGNPISVDLKHKAPIEIKCPPLLITTNVDVKSDDRWRYLFSRICVFNFLQELPIRNGTPVYELNDANWKSFFKRFWSTLELSDPEDEGDDGGSQPALRLHTGGTSQSL</sequence>
<evidence type="ECO:0000255" key="1">
    <source>
        <dbReference type="HAMAP-Rule" id="MF_04000"/>
    </source>
</evidence>
<evidence type="ECO:0000256" key="2">
    <source>
        <dbReference type="SAM" id="MobiDB-lite"/>
    </source>
</evidence>
<organismHost>
    <name type="scientific">Sylvilagus floridanus</name>
    <name type="common">Cottontail rabbit</name>
    <dbReference type="NCBI Taxonomy" id="9988"/>
</organismHost>
<accession>P03112</accession>
<comment type="function">
    <text evidence="1">ATP-dependent DNA 3'-5' helicase required for initiation of viral DNA replication. It forms a complex with the viral E2 protein. The E1-E2 complex binds to the replication origin which contains binding sites for both proteins. During the initial step, a dimer of E1 interacts with a dimer of protein E2 leading to a complex that binds the viral origin of replication with high specificity. Then, a second dimer of E1 displaces the E2 dimer in an ATP-dependent manner to form the E1 tetramer. Following this, two E1 monomers are added to each half of the site, which results in the formation of two E1 trimers on the viral ori. Subsequently, two hexamers will be created. The double hexamer acts as a bi-directional helicase machinery and unwinds the viral DNA and then recruits the host DNA polymerase to start replication.</text>
</comment>
<comment type="catalytic activity">
    <reaction evidence="1">
        <text>Couples ATP hydrolysis with the unwinding of duplex DNA by translocating in the 3'-5' direction.</text>
        <dbReference type="EC" id="5.6.2.4"/>
    </reaction>
</comment>
<comment type="catalytic activity">
    <reaction evidence="1">
        <text>ATP + H2O = ADP + phosphate + H(+)</text>
        <dbReference type="Rhea" id="RHEA:13065"/>
        <dbReference type="ChEBI" id="CHEBI:15377"/>
        <dbReference type="ChEBI" id="CHEBI:15378"/>
        <dbReference type="ChEBI" id="CHEBI:30616"/>
        <dbReference type="ChEBI" id="CHEBI:43474"/>
        <dbReference type="ChEBI" id="CHEBI:456216"/>
        <dbReference type="EC" id="5.6.2.4"/>
    </reaction>
</comment>
<comment type="subunit">
    <text evidence="1">Can form hexamers. Interacts with E2 protein; this interaction increases E1 DNA binding specificity. Interacts with host DNA polymerase subunit POLA2. Interacts with host single stranded DNA-binding protein RPA1. Interacts with host TOP1; this interaction stimulates the enzymatic activity of TOP1.</text>
</comment>
<comment type="subcellular location">
    <subcellularLocation>
        <location evidence="1">Host nucleus</location>
    </subcellularLocation>
</comment>
<comment type="PTM">
    <text evidence="1">Phosphorylated.</text>
</comment>
<comment type="PTM">
    <text evidence="1">Sumoylated.</text>
</comment>
<comment type="similarity">
    <text evidence="1">Belongs to the papillomaviridae E1 protein family.</text>
</comment>
<dbReference type="EC" id="5.6.2.4" evidence="1"/>
<dbReference type="EMBL" id="K02708">
    <property type="status" value="NOT_ANNOTATED_CDS"/>
    <property type="molecule type" value="Genomic_DNA"/>
</dbReference>
<dbReference type="PIR" id="A03657">
    <property type="entry name" value="W1WLRB"/>
</dbReference>
<dbReference type="SMR" id="P03112"/>
<dbReference type="Proteomes" id="UP000008787">
    <property type="component" value="Segment"/>
</dbReference>
<dbReference type="GO" id="GO:0042025">
    <property type="term" value="C:host cell nucleus"/>
    <property type="evidence" value="ECO:0007669"/>
    <property type="project" value="UniProtKB-SubCell"/>
</dbReference>
<dbReference type="GO" id="GO:0005524">
    <property type="term" value="F:ATP binding"/>
    <property type="evidence" value="ECO:0007669"/>
    <property type="project" value="UniProtKB-UniRule"/>
</dbReference>
<dbReference type="GO" id="GO:0016887">
    <property type="term" value="F:ATP hydrolysis activity"/>
    <property type="evidence" value="ECO:0007669"/>
    <property type="project" value="RHEA"/>
</dbReference>
<dbReference type="GO" id="GO:0003677">
    <property type="term" value="F:DNA binding"/>
    <property type="evidence" value="ECO:0007669"/>
    <property type="project" value="UniProtKB-UniRule"/>
</dbReference>
<dbReference type="GO" id="GO:0003678">
    <property type="term" value="F:DNA helicase activity"/>
    <property type="evidence" value="ECO:0007669"/>
    <property type="project" value="UniProtKB-UniRule"/>
</dbReference>
<dbReference type="GO" id="GO:0006260">
    <property type="term" value="P:DNA replication"/>
    <property type="evidence" value="ECO:0007669"/>
    <property type="project" value="UniProtKB-UniRule"/>
</dbReference>
<dbReference type="Gene3D" id="3.40.1310.10">
    <property type="match status" value="1"/>
</dbReference>
<dbReference type="Gene3D" id="3.40.50.300">
    <property type="entry name" value="P-loop containing nucleotide triphosphate hydrolases"/>
    <property type="match status" value="1"/>
</dbReference>
<dbReference type="Gene3D" id="1.10.10.510">
    <property type="entry name" value="Zinc finger, large T-antigen D1 domain"/>
    <property type="match status" value="1"/>
</dbReference>
<dbReference type="HAMAP" id="MF_04000">
    <property type="entry name" value="PPV_E1"/>
    <property type="match status" value="1"/>
</dbReference>
<dbReference type="InterPro" id="IPR014015">
    <property type="entry name" value="Helicase_SF3_DNA-vir"/>
</dbReference>
<dbReference type="InterPro" id="IPR027417">
    <property type="entry name" value="P-loop_NTPase"/>
</dbReference>
<dbReference type="InterPro" id="IPR001177">
    <property type="entry name" value="PPV_DNA_helicase_E1_C"/>
</dbReference>
<dbReference type="InterPro" id="IPR014000">
    <property type="entry name" value="PPV_DNA_helicase_E1_N"/>
</dbReference>
<dbReference type="InterPro" id="IPR046832">
    <property type="entry name" value="PPV_E1_DBD"/>
</dbReference>
<dbReference type="InterPro" id="IPR046935">
    <property type="entry name" value="PPV_E1_DBD_sf"/>
</dbReference>
<dbReference type="InterPro" id="IPR016393">
    <property type="entry name" value="Rep_E1_papillomaV"/>
</dbReference>
<dbReference type="InterPro" id="IPR037102">
    <property type="entry name" value="Znf_lg_T-Ag_D1_dom_sf"/>
</dbReference>
<dbReference type="Pfam" id="PF00519">
    <property type="entry name" value="PPV_E1_C"/>
    <property type="match status" value="1"/>
</dbReference>
<dbReference type="Pfam" id="PF20450">
    <property type="entry name" value="PPV_E1_DBD"/>
    <property type="match status" value="1"/>
</dbReference>
<dbReference type="Pfam" id="PF00524">
    <property type="entry name" value="PPV_E1_N"/>
    <property type="match status" value="1"/>
</dbReference>
<dbReference type="PIRSF" id="PIRSF003383">
    <property type="entry name" value="Rep_E1_papillomaV"/>
    <property type="match status" value="1"/>
</dbReference>
<dbReference type="SUPFAM" id="SSF55464">
    <property type="entry name" value="Origin of replication-binding domain, RBD-like"/>
    <property type="match status" value="1"/>
</dbReference>
<dbReference type="SUPFAM" id="SSF52540">
    <property type="entry name" value="P-loop containing nucleoside triphosphate hydrolases"/>
    <property type="match status" value="1"/>
</dbReference>
<dbReference type="PROSITE" id="PS51206">
    <property type="entry name" value="SF3_HELICASE_1"/>
    <property type="match status" value="1"/>
</dbReference>
<gene>
    <name evidence="1" type="primary">E1</name>
</gene>
<proteinExistence type="inferred from homology"/>
<name>VE1_CRPVK</name>
<keyword id="KW-0067">ATP-binding</keyword>
<keyword id="KW-0235">DNA replication</keyword>
<keyword id="KW-0238">DNA-binding</keyword>
<keyword id="KW-0244">Early protein</keyword>
<keyword id="KW-0347">Helicase</keyword>
<keyword id="KW-1048">Host nucleus</keyword>
<keyword id="KW-0378">Hydrolase</keyword>
<keyword id="KW-0413">Isomerase</keyword>
<keyword id="KW-1017">Isopeptide bond</keyword>
<keyword id="KW-0547">Nucleotide-binding</keyword>
<keyword id="KW-0597">Phosphoprotein</keyword>
<keyword id="KW-1185">Reference proteome</keyword>
<keyword id="KW-0832">Ubl conjugation</keyword>
<organism>
    <name type="scientific">Cottontail rabbit papillomavirus (strain Kansas)</name>
    <name type="common">CRPV</name>
    <name type="synonym">Papillomavirus sylvilagi</name>
    <dbReference type="NCBI Taxonomy" id="31553"/>
    <lineage>
        <taxon>Viruses</taxon>
        <taxon>Monodnaviria</taxon>
        <taxon>Shotokuvirae</taxon>
        <taxon>Cossaviricota</taxon>
        <taxon>Papovaviricetes</taxon>
        <taxon>Zurhausenvirales</taxon>
        <taxon>Papillomaviridae</taxon>
        <taxon>Firstpapillomavirinae</taxon>
        <taxon>Kappapapillomavirus</taxon>
        <taxon>Kappapapillomavirus 2</taxon>
    </lineage>
</organism>
<reference key="1">
    <citation type="journal article" date="1985" name="Proc. Natl. Acad. Sci. U.S.A.">
        <title>Genomic structure of the cottontail rabbit (Shope) papillomavirus.</title>
        <authorList>
            <person name="Giri I."/>
            <person name="Danos O."/>
            <person name="Yaniv M."/>
        </authorList>
    </citation>
    <scope>NUCLEOTIDE SEQUENCE [GENOMIC DNA]</scope>
</reference>